<keyword id="KW-0007">Acetylation</keyword>
<keyword id="KW-0024">Alternative initiation</keyword>
<keyword id="KW-0158">Chromosome</keyword>
<keyword id="KW-0164">Citrullination</keyword>
<keyword id="KW-0217">Developmental protein</keyword>
<keyword id="KW-0221">Differentiation</keyword>
<keyword id="KW-0903">Direct protein sequencing</keyword>
<keyword id="KW-0238">DNA-binding</keyword>
<keyword id="KW-0379">Hydroxylation</keyword>
<keyword id="KW-1017">Isopeptide bond</keyword>
<keyword id="KW-0488">Methylation</keyword>
<keyword id="KW-0544">Nucleosome core</keyword>
<keyword id="KW-0539">Nucleus</keyword>
<keyword id="KW-0892">Osteogenesis</keyword>
<keyword id="KW-0597">Phosphoprotein</keyword>
<keyword id="KW-1185">Reference proteome</keyword>
<keyword id="KW-0964">Secreted</keyword>
<keyword id="KW-0832">Ubl conjugation</keyword>
<accession>P62804</accession>
<accession>P02304</accession>
<accession>P02305</accession>
<accession>Q5BM23</accession>
<accession>Q7M0E8</accession>
<proteinExistence type="evidence at protein level"/>
<feature type="initiator methionine" description="Removed" evidence="7">
    <location>
        <position position="1"/>
    </location>
</feature>
<feature type="chain" id="PRO_0000158355" description="Histone H4">
    <location>
        <begin position="2"/>
        <end position="103"/>
    </location>
</feature>
<feature type="peptide" id="PRO_0000225591" description="Osteogenic growth peptide">
    <location>
        <begin position="90"/>
        <end position="103"/>
    </location>
</feature>
<feature type="DNA-binding region">
    <location>
        <begin position="17"/>
        <end position="21"/>
    </location>
</feature>
<feature type="region of interest" description="Disordered" evidence="4">
    <location>
        <begin position="1"/>
        <end position="20"/>
    </location>
</feature>
<feature type="compositionally biased region" description="Gly residues" evidence="4">
    <location>
        <begin position="1"/>
        <end position="14"/>
    </location>
</feature>
<feature type="modified residue" description="N-acetylserine" evidence="7">
    <location>
        <position position="2"/>
    </location>
</feature>
<feature type="modified residue" description="Phosphoserine" evidence="2">
    <location>
        <position position="2"/>
    </location>
</feature>
<feature type="modified residue" description="Asymmetric dimethylarginine; by PRMT1; alternate" evidence="2">
    <location>
        <position position="4"/>
    </location>
</feature>
<feature type="modified residue" description="Citrulline; alternate" evidence="1">
    <location>
        <position position="4"/>
    </location>
</feature>
<feature type="modified residue" description="Omega-N-methylarginine; by PRMT1; alternate" evidence="2">
    <location>
        <position position="4"/>
    </location>
</feature>
<feature type="modified residue" description="Symmetric dimethylarginine; by PRMT5 and PRMT7; alternate" evidence="3">
    <location>
        <position position="4"/>
    </location>
</feature>
<feature type="modified residue" description="N6-(2-hydroxyisobutyryl)lysine; alternate" evidence="2">
    <location>
        <position position="6"/>
    </location>
</feature>
<feature type="modified residue" description="N6-acetyl-N6-methyllysine; alternate" evidence="2">
    <location>
        <position position="6"/>
    </location>
</feature>
<feature type="modified residue" description="N6-acetyllysine; alternate" evidence="2">
    <location>
        <position position="6"/>
    </location>
</feature>
<feature type="modified residue" description="N6-butyryllysine; alternate" evidence="2">
    <location>
        <position position="6"/>
    </location>
</feature>
<feature type="modified residue" description="N6-crotonyllysine; alternate" evidence="2">
    <location>
        <position position="6"/>
    </location>
</feature>
<feature type="modified residue" description="N6-glutaryllysine; alternate" evidence="2">
    <location>
        <position position="6"/>
    </location>
</feature>
<feature type="modified residue" description="N6-lactoyllysine; alternate" evidence="2">
    <location>
        <position position="6"/>
    </location>
</feature>
<feature type="modified residue" description="N6-(2-hydroxyisobutyryl)lysine; alternate" evidence="2">
    <location>
        <position position="9"/>
    </location>
</feature>
<feature type="modified residue" description="N6-(beta-hydroxybutyryl)lysine; alternate" evidence="3">
    <location>
        <position position="9"/>
    </location>
</feature>
<feature type="modified residue" description="N6-acetyllysine; alternate" evidence="2">
    <location>
        <position position="9"/>
    </location>
</feature>
<feature type="modified residue" description="N6-butyryllysine; alternate" evidence="2">
    <location>
        <position position="9"/>
    </location>
</feature>
<feature type="modified residue" description="N6-crotonyllysine; alternate" evidence="2">
    <location>
        <position position="9"/>
    </location>
</feature>
<feature type="modified residue" description="N6-lactoyllysine; alternate" evidence="2">
    <location>
        <position position="9"/>
    </location>
</feature>
<feature type="modified residue" description="N6-propionyllysine; alternate" evidence="2">
    <location>
        <position position="9"/>
    </location>
</feature>
<feature type="modified residue" description="N6-(2-hydroxyisobutyryl)lysine; alternate" evidence="2">
    <location>
        <position position="13"/>
    </location>
</feature>
<feature type="modified residue" description="N6-(beta-hydroxybutyryl)lysine; alternate" evidence="3">
    <location>
        <position position="13"/>
    </location>
</feature>
<feature type="modified residue" description="N6-acetyl-N6-methyllysine; alternate" evidence="2">
    <location>
        <position position="13"/>
    </location>
</feature>
<feature type="modified residue" description="N6-acetyllysine; alternate" evidence="2">
    <location>
        <position position="13"/>
    </location>
</feature>
<feature type="modified residue" description="N6-butyryllysine; alternate" evidence="2">
    <location>
        <position position="13"/>
    </location>
</feature>
<feature type="modified residue" description="N6-crotonyllysine; alternate" evidence="2">
    <location>
        <position position="13"/>
    </location>
</feature>
<feature type="modified residue" description="N6-glutaryllysine; alternate" evidence="2">
    <location>
        <position position="13"/>
    </location>
</feature>
<feature type="modified residue" description="N6-lactoyllysine; alternate" evidence="2">
    <location>
        <position position="13"/>
    </location>
</feature>
<feature type="modified residue" description="N6-methyllysine; alternate" evidence="2">
    <location>
        <position position="13"/>
    </location>
</feature>
<feature type="modified residue" description="N6-succinyllysine; alternate" evidence="2">
    <location>
        <position position="13"/>
    </location>
</feature>
<feature type="modified residue" description="N6-(2-hydroxyisobutyryl)lysine; alternate" evidence="2">
    <location>
        <position position="17"/>
    </location>
</feature>
<feature type="modified residue" description="N6-acetyllysine; alternate" evidence="7">
    <location>
        <position position="17"/>
    </location>
</feature>
<feature type="modified residue" description="N6-butyryllysine; alternate" evidence="2">
    <location>
        <position position="17"/>
    </location>
</feature>
<feature type="modified residue" description="N6-crotonyllysine; alternate" evidence="2">
    <location>
        <position position="17"/>
    </location>
</feature>
<feature type="modified residue" description="N6-lactoyllysine; alternate" evidence="2">
    <location>
        <position position="17"/>
    </location>
</feature>
<feature type="modified residue" description="N6-propionyllysine; alternate" evidence="2">
    <location>
        <position position="17"/>
    </location>
</feature>
<feature type="modified residue" description="N6,N6,N6-trimethyllysine; alternate" evidence="2">
    <location>
        <position position="21"/>
    </location>
</feature>
<feature type="modified residue" description="N6,N6-dimethyllysine; alternate" evidence="7">
    <location>
        <position position="21"/>
    </location>
</feature>
<feature type="modified residue" description="N6-methyllysine; alternate" evidence="7">
    <location>
        <position position="21"/>
    </location>
</feature>
<feature type="modified residue" description="N6-(2-hydroxyisobutyryl)lysine; alternate" evidence="2">
    <location>
        <position position="32"/>
    </location>
</feature>
<feature type="modified residue" description="N6-acetyllysine; alternate" evidence="2">
    <location>
        <position position="32"/>
    </location>
</feature>
<feature type="modified residue" description="N6-butyryllysine; alternate" evidence="2">
    <location>
        <position position="32"/>
    </location>
</feature>
<feature type="modified residue" description="N6-glutaryllysine; alternate" evidence="2">
    <location>
        <position position="32"/>
    </location>
</feature>
<feature type="modified residue" description="N6-lactoyllysine; alternate" evidence="2">
    <location>
        <position position="32"/>
    </location>
</feature>
<feature type="modified residue" description="N6-propionyllysine; alternate" evidence="2">
    <location>
        <position position="32"/>
    </location>
</feature>
<feature type="modified residue" description="N6-succinyllysine; alternate" evidence="2">
    <location>
        <position position="32"/>
    </location>
</feature>
<feature type="modified residue" description="N6-(2-hydroxyisobutyryl)lysine; alternate" evidence="2">
    <location>
        <position position="45"/>
    </location>
</feature>
<feature type="modified residue" description="N6-butyryllysine; alternate" evidence="2">
    <location>
        <position position="45"/>
    </location>
</feature>
<feature type="modified residue" description="N6-propionyllysine; alternate" evidence="2">
    <location>
        <position position="45"/>
    </location>
</feature>
<feature type="modified residue" description="Phosphoserine" evidence="10 11">
    <location>
        <position position="48"/>
    </location>
</feature>
<feature type="modified residue" description="Phosphotyrosine" evidence="2">
    <location>
        <position position="52"/>
    </location>
</feature>
<feature type="modified residue" description="N6-(2-hydroxyisobutyryl)lysine; alternate" evidence="2">
    <location>
        <position position="60"/>
    </location>
</feature>
<feature type="modified residue" description="N6-glutaryllysine; alternate" evidence="2">
    <location>
        <position position="60"/>
    </location>
</feature>
<feature type="modified residue" description="N6-(2-hydroxyisobutyryl)lysine; alternate" evidence="2">
    <location>
        <position position="78"/>
    </location>
</feature>
<feature type="modified residue" description="N6-butyryllysine; alternate" evidence="2">
    <location>
        <position position="78"/>
    </location>
</feature>
<feature type="modified residue" description="N6-glutaryllysine; alternate" evidence="2">
    <location>
        <position position="78"/>
    </location>
</feature>
<feature type="modified residue" description="N6-lactoyllysine; alternate" evidence="2">
    <location>
        <position position="78"/>
    </location>
</feature>
<feature type="modified residue" description="N6-propionyllysine; alternate" evidence="2">
    <location>
        <position position="78"/>
    </location>
</feature>
<feature type="modified residue" description="N6-succinyllysine; alternate" evidence="2">
    <location>
        <position position="78"/>
    </location>
</feature>
<feature type="modified residue" description="N6-(2-hydroxyisobutyryl)lysine; alternate" evidence="2">
    <location>
        <position position="80"/>
    </location>
</feature>
<feature type="modified residue" description="N6-butyryllysine; alternate" evidence="2">
    <location>
        <position position="80"/>
    </location>
</feature>
<feature type="modified residue" description="N6-glutaryllysine; alternate" evidence="2">
    <location>
        <position position="80"/>
    </location>
</feature>
<feature type="modified residue" description="N6-propionyllysine; alternate" evidence="2">
    <location>
        <position position="80"/>
    </location>
</feature>
<feature type="modified residue" description="N6-succinyllysine; alternate" evidence="3">
    <location>
        <position position="80"/>
    </location>
</feature>
<feature type="modified residue" description="Phosphothreonine" evidence="11">
    <location>
        <position position="81"/>
    </location>
</feature>
<feature type="modified residue" description="Phosphotyrosine" evidence="11">
    <location>
        <position position="89"/>
    </location>
</feature>
<feature type="modified residue" description="N6-(2-hydroxyisobutyryl)lysine; alternate" evidence="2">
    <location>
        <position position="92"/>
    </location>
</feature>
<feature type="modified residue" description="N6-acetyllysine; alternate" evidence="2">
    <location>
        <position position="92"/>
    </location>
</feature>
<feature type="modified residue" description="N6-butyryllysine; alternate" evidence="2">
    <location>
        <position position="92"/>
    </location>
</feature>
<feature type="modified residue" description="N6-glutaryllysine; alternate" evidence="2">
    <location>
        <position position="92"/>
    </location>
</feature>
<feature type="modified residue" description="N6-lactoyllysine; alternate" evidence="2">
    <location>
        <position position="92"/>
    </location>
</feature>
<feature type="modified residue" description="N6-propionyllysine; alternate" evidence="2">
    <location>
        <position position="92"/>
    </location>
</feature>
<feature type="modified residue" description="N6-succinyllysine; alternate" evidence="2">
    <location>
        <position position="92"/>
    </location>
</feature>
<feature type="cross-link" description="Glycyl lysine isopeptide (Lys-Gly) (interchain with G-Cter in SUMO2); alternate" evidence="2">
    <location>
        <position position="13"/>
    </location>
</feature>
<feature type="cross-link" description="Glycyl lysine isopeptide (Lys-Gly) (interchain with G-Cter in SUMO2); alternate" evidence="2">
    <location>
        <position position="21"/>
    </location>
</feature>
<feature type="cross-link" description="Glycyl lysine isopeptide (Lys-Gly) (interchain with G-Cter in SUMO2); alternate" evidence="2">
    <location>
        <position position="32"/>
    </location>
</feature>
<feature type="cross-link" description="Glycyl lysine isopeptide (Lys-Gly) (interchain with G-Cter in UFM1); alternate" evidence="2">
    <location>
        <position position="32"/>
    </location>
</feature>
<feature type="cross-link" description="Glycyl lysine isopeptide (Lys-Gly) (interchain with G-Cter in SUMO2); alternate" evidence="2">
    <location>
        <position position="60"/>
    </location>
</feature>
<feature type="cross-link" description="Glycyl lysine isopeptide (Lys-Gly) (interchain with G-Cter in SUMO2); alternate" evidence="2">
    <location>
        <position position="80"/>
    </location>
</feature>
<feature type="cross-link" description="Glycyl lysine isopeptide (Lys-Gly) (interchain with G-Cter in SUMO2); alternate" evidence="2">
    <location>
        <position position="92"/>
    </location>
</feature>
<feature type="cross-link" description="Glycyl lysine isopeptide (Lys-Gly) (interchain with G-Cter in ubiquitin); alternate" evidence="2">
    <location>
        <position position="92"/>
    </location>
</feature>
<feature type="splice variant" id="VSP_018804" description="In isoform OGP precursor." evidence="8">
    <location>
        <begin position="1"/>
        <end position="84"/>
    </location>
</feature>
<organism>
    <name type="scientific">Rattus norvegicus</name>
    <name type="common">Rat</name>
    <dbReference type="NCBI Taxonomy" id="10116"/>
    <lineage>
        <taxon>Eukaryota</taxon>
        <taxon>Metazoa</taxon>
        <taxon>Chordata</taxon>
        <taxon>Craniata</taxon>
        <taxon>Vertebrata</taxon>
        <taxon>Euteleostomi</taxon>
        <taxon>Mammalia</taxon>
        <taxon>Eutheria</taxon>
        <taxon>Euarchontoglires</taxon>
        <taxon>Glires</taxon>
        <taxon>Rodentia</taxon>
        <taxon>Myomorpha</taxon>
        <taxon>Muroidea</taxon>
        <taxon>Muridae</taxon>
        <taxon>Murinae</taxon>
        <taxon>Rattus</taxon>
    </lineage>
</organism>
<gene>
    <name type="primary">H4c2</name>
    <name type="synonym">Hist1h4b</name>
    <name type="synonym">Hist4</name>
</gene>
<gene>
    <name type="primary">Hist1h4m</name>
</gene>
<gene>
    <name type="primary">H4c16</name>
    <name type="synonym">H4f16</name>
    <name type="synonym">H4ft</name>
    <name evidence="9" type="synonym">Hist4h4</name>
</gene>
<protein>
    <recommendedName>
        <fullName>Histone H4</fullName>
    </recommendedName>
    <component>
        <recommendedName>
            <fullName>Osteogenic growth peptide</fullName>
            <shortName>OGP</shortName>
        </recommendedName>
    </component>
</protein>
<reference key="1">
    <citation type="journal article" date="1987" name="Exp. Cell Res.">
        <title>A rat histone H4 gene closely associated with the testis-specific H1t gene.</title>
        <authorList>
            <person name="Grimes S."/>
            <person name="Weisz-Carrington P."/>
            <person name="Daum H. III"/>
            <person name="Smith J."/>
            <person name="Green L."/>
            <person name="Wright K."/>
            <person name="Stein G."/>
            <person name="Stein J."/>
        </authorList>
    </citation>
    <scope>NUCLEOTIDE SEQUENCE [GENOMIC DNA]</scope>
    <source>
        <strain>Sprague-Dawley</strain>
        <tissue>Liver</tissue>
    </source>
</reference>
<reference key="2">
    <citation type="journal article" date="1989" name="Biochim. Biophys. Acta">
        <title>Comparison of the structural organization and expression of germinal and somatic rat histone H4 genes.</title>
        <authorList>
            <person name="Wolfe S.A."/>
            <person name="Anderson J.V."/>
            <person name="Grimes S.R."/>
            <person name="Stein G.S."/>
            <person name="Stein J.S."/>
        </authorList>
    </citation>
    <scope>NUCLEOTIDE SEQUENCE [GENOMIC DNA]</scope>
    <source>
        <strain>Sprague-Dawley</strain>
    </source>
</reference>
<reference key="3">
    <citation type="journal article" date="1991" name="J. Biol. Chem.">
        <title>Protein-DNA interactions within the rat histone H4t promoter.</title>
        <authorList>
            <person name="Wolfe S.A."/>
            <person name="Grimes S.R."/>
        </authorList>
    </citation>
    <scope>NUCLEOTIDE SEQUENCE [GENOMIC DNA]</scope>
</reference>
<reference key="4">
    <citation type="journal article" date="2005" name="Peptides">
        <title>Correlation between the expression of the histone H4 mRNA variant H4-v.1 and the levels of histone H4-(86-100) and H4-(89-102) (OGP) in various rat tissues and alveolar macrophages.</title>
        <authorList>
            <person name="Poirier R."/>
            <person name="Lemaire I."/>
            <person name="Dumont M."/>
            <person name="Leduc N."/>
            <person name="Le H.T."/>
            <person name="Lemaire S."/>
        </authorList>
    </citation>
    <scope>NUCLEOTIDE SEQUENCE [MRNA]</scope>
    <scope>TISSUE SPECIFICITY</scope>
    <source>
        <strain>Sprague-Dawley</strain>
        <tissue>Spleen</tissue>
    </source>
</reference>
<reference key="5">
    <citation type="journal article" date="2004" name="Genome Res.">
        <title>The status, quality, and expansion of the NIH full-length cDNA project: the Mammalian Gene Collection (MGC).</title>
        <authorList>
            <consortium name="The MGC Project Team"/>
        </authorList>
    </citation>
    <scope>NUCLEOTIDE SEQUENCE [LARGE SCALE MRNA]</scope>
    <source>
        <tissue>Prostate</tissue>
    </source>
</reference>
<reference key="6">
    <citation type="journal article" date="1971" name="Biochimie">
        <title>Primary structure of glycine-rich and arginine-rich histone isolated from chloroleukemic tumor of the rat.</title>
        <authorList>
            <person name="Sautiere P."/>
            <person name="Tyrou D."/>
            <person name="Moschetto Y."/>
            <person name="Biserte G."/>
        </authorList>
    </citation>
    <scope>PROTEIN SEQUENCE OF 2-103</scope>
    <scope>ACETYLATION AT SER-2 AND LYS-17</scope>
    <scope>METHYLATION AT LYS-21</scope>
</reference>
<reference key="7">
    <citation type="journal article" date="1994" name="J. Mol. Biol.">
        <title>Evidence indicating proximity in the nucleosome between the histone H4 N termini and the globular domain of histone H1.</title>
        <authorList>
            <person name="Baneres J.L."/>
            <person name="Essalouh L."/>
            <person name="Jariel-Encontre I."/>
            <person name="Mesnier D."/>
            <person name="Garrod S."/>
            <person name="Parello J."/>
        </authorList>
    </citation>
    <scope>PROTEIN SEQUENCE OF 5-14 AND 19-32</scope>
    <source>
        <tissue>Liver</tissue>
    </source>
</reference>
<reference key="8">
    <citation type="submission" date="2007-09" db="UniProtKB">
        <authorList>
            <person name="Lubec G."/>
            <person name="Kang S.U."/>
            <person name="Lubec S."/>
        </authorList>
    </citation>
    <scope>PROTEIN SEQUENCE OF 61-78</scope>
    <scope>IDENTIFICATION BY MASS SPECTROMETRY</scope>
    <source>
        <strain>Sprague-Dawley</strain>
        <tissue>Brain</tissue>
    </source>
</reference>
<reference key="9">
    <citation type="journal article" date="1992" name="EMBO J.">
        <title>Histone H4-related osteogenic growth peptide (OGP): a novel circulating stimulator of osteoblastic activity.</title>
        <authorList>
            <person name="Bab I."/>
            <person name="Gazit D."/>
            <person name="Chorev M."/>
            <person name="Muhlrad A."/>
            <person name="Shteyer A."/>
            <person name="Greenberg Z."/>
            <person name="Namdar M."/>
            <person name="Kahn A."/>
        </authorList>
    </citation>
    <scope>PROTEIN SEQUENCE OF 90-103</scope>
    <scope>SUBCELLULAR LOCATION</scope>
</reference>
<reference key="10">
    <citation type="journal article" date="1999" name="J. Biol. Chem.">
        <title>Biosynthesis of osteogenic growth peptide via alternative translational initiation at AUG85 of histone H4 mRNA.</title>
        <authorList>
            <person name="Bab I."/>
            <person name="Smith E."/>
            <person name="Gavish H."/>
            <person name="Attar-Namdar M."/>
            <person name="Chorev M."/>
            <person name="Chen Y.C."/>
            <person name="Muhlrad A."/>
            <person name="Birnbaum M.J."/>
            <person name="Stein G."/>
            <person name="Frenkel B."/>
        </authorList>
    </citation>
    <scope>ALTERNATIVE INITIATION</scope>
</reference>
<reference key="11">
    <citation type="journal article" date="2006" name="Proc. Natl. Acad. Sci. U.S.A.">
        <title>Quantitative phosphoproteomics of vasopressin-sensitive renal cells: regulation of aquaporin-2 phosphorylation at two sites.</title>
        <authorList>
            <person name="Hoffert J.D."/>
            <person name="Pisitkun T."/>
            <person name="Wang G."/>
            <person name="Shen R.-F."/>
            <person name="Knepper M.A."/>
        </authorList>
    </citation>
    <scope>PHOSPHORYLATION [LARGE SCALE ANALYSIS] AT SER-48</scope>
    <scope>IDENTIFICATION BY MASS SPECTROMETRY [LARGE SCALE ANALYSIS]</scope>
</reference>
<reference key="12">
    <citation type="journal article" date="2009" name="Proteomics">
        <title>Mass spectrometry-compatible silver staining of histones resolved on acetic acid-urea-Triton PAGE.</title>
        <authorList>
            <person name="Pramod K.S."/>
            <person name="Bharat K."/>
            <person name="Sanjay G."/>
        </authorList>
    </citation>
    <scope>IDENTIFICATION BY MASS SPECTROMETRY</scope>
</reference>
<reference key="13">
    <citation type="journal article" date="2012" name="Nat. Commun.">
        <title>Quantitative maps of protein phosphorylation sites across 14 different rat organs and tissues.</title>
        <authorList>
            <person name="Lundby A."/>
            <person name="Secher A."/>
            <person name="Lage K."/>
            <person name="Nordsborg N.B."/>
            <person name="Dmytriyev A."/>
            <person name="Lundby C."/>
            <person name="Olsen J.V."/>
        </authorList>
    </citation>
    <scope>PHOSPHORYLATION [LARGE SCALE ANALYSIS] AT SER-48; THR-81 AND TYR-89</scope>
    <scope>IDENTIFICATION BY MASS SPECTROMETRY [LARGE SCALE ANALYSIS]</scope>
</reference>
<comment type="function">
    <molecule>Histone H4</molecule>
    <text>Core component of nucleosome. Nucleosomes wrap and compact DNA into chromatin, limiting DNA accessibility to the cellular machineries which require DNA as a template. Histones thereby play a central role in transcription regulation, DNA repair, DNA replication and chromosomal stability. DNA accessibility is regulated via a complex set of post-translational modifications of histones, also called histone code, and nucleosome remodeling.</text>
</comment>
<comment type="function">
    <molecule>Osteogenic growth peptide</molecule>
    <text evidence="5">Stimulates osteogenesis and hematopoiesis.</text>
</comment>
<comment type="subunit">
    <text evidence="2 3">The nucleosome is a histone octamer containing two molecules each of H2A, H2B, H3 and H4 assembled in one H3-H4 heterotetramer and two H2A-H2B heterodimers. The octamer wraps approximately 147 bp of DNA (By similarity). Found in a co-chaperone complex with DNJC9, MCM2 and histone H3.3-H4 dimers (By similarity). Within the complex, interacts with DNJC9 (via C-terminus); the interaction is direct (By similarity). Interacts with NASP; NASP is a histone chaperone that stabilizes and maintains a soluble pool of Histone H3-H4 dimers (By similarity).</text>
</comment>
<comment type="subcellular location">
    <subcellularLocation>
        <location evidence="5">Nucleus</location>
    </subcellularLocation>
    <subcellularLocation>
        <location evidence="5">Chromosome</location>
    </subcellularLocation>
    <text evidence="3">Localized to the nucleus when acetylated in step 11 spermatids.</text>
</comment>
<comment type="subcellular location">
    <molecule>Osteogenic growth peptide</molecule>
    <subcellularLocation>
        <location evidence="5">Secreted</location>
    </subcellularLocation>
    <text evidence="5">Osteogenic growth peptide is secreted by a mechanism independent from a hydrophobic signal sequence. The mature peptide may be imported into secretory lysosomes by an ABCA1-related protein.</text>
</comment>
<comment type="alternative products">
    <event type="alternative initiation"/>
    <isoform>
        <id>P62804-1</id>
        <name>Histone H4</name>
        <sequence type="displayed"/>
    </isoform>
    <isoform>
        <id>P62804-2</id>
        <name>OGP precursor</name>
        <sequence type="described" ref="VSP_018804"/>
    </isoform>
</comment>
<comment type="tissue specificity">
    <text evidence="6">OGP is found in serum. A potentially OGP-specific transcript is highly expressed in spleen with lower levels in lung, liver, thymus, spinal cord, pituitary gland, adrenal gland, bone marrow and lymph nodes as well as very low levels in kidney, heart and brain.</text>
</comment>
<comment type="PTM">
    <text evidence="2 3">Acetylation at Lys-6 (H4K5ac), Lys-9 (H4K8ac), Lys-13 (H4K12ac) and Lys-17 (H4K16ac) occurs in coding regions of the genome but not in heterochromatin. Acetylated as part of spermatogenesis progression prior to histone-to-protamine exchange (By similarity).</text>
</comment>
<comment type="PTM">
    <text evidence="2">Citrullination at Arg-4 (H4R3ci) by PADI4 impairs methylation.</text>
</comment>
<comment type="PTM">
    <text evidence="2">Monomethylation and asymmetric dimethylation at Arg-4 (H4R3me1 and H4R3me2a, respectively) by PRMT1 favors acetylation at Lys-9 (H4K8ac) and Lys-13 (H4K12ac). Demethylation is performed by JMJD6. Symmetric dimethylation on Arg-4 (H4R3me2s) by the PRDM1/PRMT5 complex may play a crucial role in the germ-cell lineage (By similarity).</text>
</comment>
<comment type="PTM">
    <text evidence="2">Monomethylated, dimethylated or trimethylated at Lys-21 (H4K20me1, H4K20me2, H4K20me3). Monomethylation is performed by KMT5A/SET8. Trimethylation is performed by KMT5B and KMT5C and induces gene silencing. Monomethylated at Lys-13 (H4K12me1) by N6AMT1; H4K12me1 modification is present at the promoters of numerous genes encoding cell cycle regulators.</text>
</comment>
<comment type="PTM">
    <text evidence="2">Acetyl-methylated at Lys-6 and Lys-13 (H4K5acme and H4K12acme, respectively), acetyl-methylation is an epigenetic mark of active chromatin associated with increased transcriptional initiation. Acetyl-methylation is formed by acetylation by EP300/p300 of lysine residues that are already monomethylated on the same side chain. H4K5acme and H4K12acme marks specifically bind BRD2.</text>
</comment>
<comment type="PTM">
    <text evidence="2">Phosphorylated by PAK2 at Ser-48 (H4S47ph). This phosphorylation increases the association of H3.3-H4 with the histone chaperone HIRA, thus promoting nucleosome assembly of H3.3-H4 and inhibiting nucleosome assembly of H3.1-H4 (By similarity).</text>
</comment>
<comment type="PTM">
    <text evidence="2 3">Ubiquitinated by the CUL4-DDB-RBX1 complex in response to ultraviolet irradiation. This may weaken the interaction between histones and DNA and facilitate DNA accessibility to repair proteins. Monoubiquitinated at Lys-92 of histone H4 (H4K91ub1) in response to DNA damage. The exact role of H4K91ub1 in DNA damage response is still unclear but it may function as a licensing signal for additional histone H4 post-translational modifications such as H4 Lys-21 methylation (H4K20me) (By similarity). Ubiquitinated; by PHF7 (By similarity).</text>
</comment>
<comment type="PTM">
    <text evidence="2">Sumoylated, which is associated with transcriptional repression.</text>
</comment>
<comment type="PTM">
    <text evidence="2">Crotonylation (Kcr) is specifically present in male germ cells and marks testis-specific genes in post-meiotic cells, including X-linked genes that escape sex chromosome inactivation in haploid cells. Crotonylation marks active promoters and enhancers and confers resistance to transcriptional repressors. It is also associated with post-meiotically activated genes on autosomes (By similarity).</text>
</comment>
<comment type="PTM">
    <text evidence="3">Butyrylation of histones marks active promoters and competes with histone acetylation.</text>
</comment>
<comment type="PTM">
    <text evidence="2">Glutarylation at Lys-92 (H4K91glu) destabilizes nucleosomes by promoting dissociation of the H2A-H2B dimers from nucleosomes.</text>
</comment>
<comment type="PTM">
    <text evidence="2">Ufmylated; monofmylated by UFL1 at Lys-32 (H4K31Ufm1) in response to DNA damage.</text>
</comment>
<comment type="PTM">
    <text evidence="2">Lactylated in macrophages by EP300/P300 by using lactoyl-CoA directly derived from endogenous or exogenous lactate, leading to stimulates gene transcription. Delactylated by SIRT3 at Lys-17 (H4K16la).</text>
</comment>
<comment type="similarity">
    <text evidence="8">Belongs to the histone H4 family.</text>
</comment>
<sequence>MSGRGKGGKGLGKGGAKRHRKVLRDNIQGITKPAIRRLARRGGVKRISGLIYEETRGVLKVFLENVIRDAVTYTEHAKRKTVTAMDVVYALKRQGRTLYGFGG</sequence>
<evidence type="ECO:0000250" key="1"/>
<evidence type="ECO:0000250" key="2">
    <source>
        <dbReference type="UniProtKB" id="P62805"/>
    </source>
</evidence>
<evidence type="ECO:0000250" key="3">
    <source>
        <dbReference type="UniProtKB" id="P62806"/>
    </source>
</evidence>
<evidence type="ECO:0000256" key="4">
    <source>
        <dbReference type="SAM" id="MobiDB-lite"/>
    </source>
</evidence>
<evidence type="ECO:0000269" key="5">
    <source>
    </source>
</evidence>
<evidence type="ECO:0000269" key="6">
    <source>
    </source>
</evidence>
<evidence type="ECO:0000269" key="7">
    <source>
    </source>
</evidence>
<evidence type="ECO:0000305" key="8"/>
<evidence type="ECO:0000312" key="9">
    <source>
        <dbReference type="RGD" id="620814"/>
    </source>
</evidence>
<evidence type="ECO:0007744" key="10">
    <source>
    </source>
</evidence>
<evidence type="ECO:0007744" key="11">
    <source>
    </source>
</evidence>
<name>H4_RAT</name>
<dbReference type="EMBL" id="M27433">
    <property type="protein sequence ID" value="AAA60735.1"/>
    <property type="molecule type" value="Genomic_DNA"/>
</dbReference>
<dbReference type="EMBL" id="X13554">
    <property type="protein sequence ID" value="CAA31906.1"/>
    <property type="molecule type" value="Genomic_DNA"/>
</dbReference>
<dbReference type="EMBL" id="M28409">
    <property type="protein sequence ID" value="AAA41306.1"/>
    <property type="molecule type" value="Genomic_DNA"/>
</dbReference>
<dbReference type="EMBL" id="AY936209">
    <property type="protein sequence ID" value="AAX28930.1"/>
    <property type="molecule type" value="mRNA"/>
</dbReference>
<dbReference type="EMBL" id="BC100619">
    <property type="protein sequence ID" value="AAI00620.1"/>
    <property type="molecule type" value="mRNA"/>
</dbReference>
<dbReference type="PIR" id="A91265">
    <property type="entry name" value="HSRT4"/>
</dbReference>
<dbReference type="PIR" id="S53749">
    <property type="entry name" value="S53749"/>
</dbReference>
<dbReference type="RefSeq" id="NP_001116941.1">
    <molecule id="P62804-1"/>
    <property type="nucleotide sequence ID" value="NM_001123469.1"/>
</dbReference>
<dbReference type="RefSeq" id="NP_001258150.1">
    <molecule id="P62804-1"/>
    <property type="nucleotide sequence ID" value="NM_001271221.1"/>
</dbReference>
<dbReference type="RefSeq" id="NP_073177.1">
    <molecule id="P62804-1"/>
    <property type="nucleotide sequence ID" value="NM_022686.2"/>
</dbReference>
<dbReference type="RefSeq" id="XP_003749904.3">
    <property type="nucleotide sequence ID" value="XM_003749856.4"/>
</dbReference>
<dbReference type="RefSeq" id="XP_008761668.1">
    <property type="nucleotide sequence ID" value="XM_008763446.1"/>
</dbReference>
<dbReference type="RefSeq" id="XP_008761670.1">
    <property type="nucleotide sequence ID" value="XM_008763448.2"/>
</dbReference>
<dbReference type="RefSeq" id="XP_008769992.1">
    <property type="nucleotide sequence ID" value="XM_008771770.2"/>
</dbReference>
<dbReference type="RefSeq" id="XP_008772221.1">
    <property type="nucleotide sequence ID" value="XM_008773999.1"/>
</dbReference>
<dbReference type="RefSeq" id="XP_578415.4">
    <property type="nucleotide sequence ID" value="XM_578415.6"/>
</dbReference>
<dbReference type="SMR" id="P62804"/>
<dbReference type="BioGRID" id="1200084">
    <property type="interactions" value="1"/>
</dbReference>
<dbReference type="BioGRID" id="249165">
    <property type="interactions" value="7"/>
</dbReference>
<dbReference type="BioGRID" id="253434">
    <property type="interactions" value="2"/>
</dbReference>
<dbReference type="BioGRID" id="254947">
    <property type="interactions" value="2"/>
</dbReference>
<dbReference type="BioGRID" id="595036">
    <property type="interactions" value="2"/>
</dbReference>
<dbReference type="CORUM" id="P62804"/>
<dbReference type="FunCoup" id="P62804">
    <property type="interactions" value="2050"/>
</dbReference>
<dbReference type="IntAct" id="P62804">
    <property type="interactions" value="4"/>
</dbReference>
<dbReference type="MINT" id="P62804"/>
<dbReference type="STRING" id="10116.ENSRNOP00000039602"/>
<dbReference type="GlyGen" id="P62804">
    <property type="glycosylation" value="1 site, 1 O-linked glycan (1 site)"/>
</dbReference>
<dbReference type="iPTMnet" id="P62804"/>
<dbReference type="PhosphoSitePlus" id="P62804"/>
<dbReference type="SwissPalm" id="P62804"/>
<dbReference type="jPOST" id="P62804"/>
<dbReference type="PaxDb" id="10116-ENSRNOP00000039602"/>
<dbReference type="ABCD" id="P62804">
    <property type="antibodies" value="1 sequenced antibody"/>
</dbReference>
<dbReference type="Ensembl" id="ENSRNOT00000040210.5">
    <molecule id="P62804-1"/>
    <property type="protein sequence ID" value="ENSRNOP00000039602.3"/>
    <property type="gene ID" value="ENSRNOG00000032224.5"/>
</dbReference>
<dbReference type="Ensembl" id="ENSRNOT00000080490.2">
    <molecule id="P62804-1"/>
    <property type="protein sequence ID" value="ENSRNOP00000071163.1"/>
    <property type="gene ID" value="ENSRNOG00000054017.2"/>
</dbReference>
<dbReference type="Ensembl" id="ENSRNOT00000088408.2">
    <molecule id="P62804-1"/>
    <property type="protein sequence ID" value="ENSRNOP00000074659.1"/>
    <property type="gene ID" value="ENSRNOG00000063552.1"/>
</dbReference>
<dbReference type="Ensembl" id="ENSRNOT00000105806.1">
    <molecule id="P62804-1"/>
    <property type="protein sequence ID" value="ENSRNOP00000093704.1"/>
    <property type="gene ID" value="ENSRNOG00000065263.1"/>
</dbReference>
<dbReference type="Ensembl" id="ENSRNOT00000106060.1">
    <molecule id="P62804-1"/>
    <property type="protein sequence ID" value="ENSRNOP00000091116.1"/>
    <property type="gene ID" value="ENSRNOG00000065263.1"/>
</dbReference>
<dbReference type="Ensembl" id="ENSRNOT00000107328.1">
    <molecule id="P62804-1"/>
    <property type="protein sequence ID" value="ENSRNOP00000087795.1"/>
    <property type="gene ID" value="ENSRNOG00000070513.1"/>
</dbReference>
<dbReference type="Ensembl" id="ENSRNOT00000112120.1">
    <molecule id="P62804-1"/>
    <property type="protein sequence ID" value="ENSRNOP00000079614.1"/>
    <property type="gene ID" value="ENSRNOG00000066473.1"/>
</dbReference>
<dbReference type="Ensembl" id="ENSRNOT00000112947.1">
    <molecule id="P62804-1"/>
    <property type="protein sequence ID" value="ENSRNOP00000091037.1"/>
    <property type="gene ID" value="ENSRNOG00000064025.1"/>
</dbReference>
<dbReference type="Ensembl" id="ENSRNOT00000114507.1">
    <molecule id="P62804-1"/>
    <property type="protein sequence ID" value="ENSRNOP00000080829.1"/>
    <property type="gene ID" value="ENSRNOG00000070706.1"/>
</dbReference>
<dbReference type="Ensembl" id="ENSRNOT00000115294.1">
    <molecule id="P62804-1"/>
    <property type="protein sequence ID" value="ENSRNOP00000087751.1"/>
    <property type="gene ID" value="ENSRNOG00000067648.1"/>
</dbReference>
<dbReference type="Ensembl" id="ENSRNOT00000117583.1">
    <molecule id="P62804-1"/>
    <property type="protein sequence ID" value="ENSRNOP00000080971.1"/>
    <property type="gene ID" value="ENSRNOG00000065263.1"/>
</dbReference>
<dbReference type="Ensembl" id="ENSRNOT00000120238.1">
    <molecule id="P62804-1"/>
    <property type="protein sequence ID" value="ENSRNOP00000091524.1"/>
    <property type="gene ID" value="ENSRNOG00000066473.1"/>
</dbReference>
<dbReference type="GeneID" id="291152"/>
<dbReference type="GeneID" id="295277"/>
<dbReference type="GeneID" id="64627"/>
<dbReference type="KEGG" id="rno:291152"/>
<dbReference type="KEGG" id="rno:295277"/>
<dbReference type="KEGG" id="rno:64627"/>
<dbReference type="UCSC" id="RGD:620814">
    <molecule id="P62804-1"/>
    <property type="organism name" value="rat"/>
</dbReference>
<dbReference type="AGR" id="RGD:1304905"/>
<dbReference type="AGR" id="RGD:1306905"/>
<dbReference type="AGR" id="RGD:1307448"/>
<dbReference type="AGR" id="RGD:152995531"/>
<dbReference type="AGR" id="RGD:620814"/>
<dbReference type="CTD" id="291152"/>
<dbReference type="CTD" id="64627"/>
<dbReference type="CTD" id="8370"/>
<dbReference type="RGD" id="620814">
    <property type="gene designation" value="Hist1h4b"/>
</dbReference>
<dbReference type="eggNOG" id="KOG3467">
    <property type="taxonomic scope" value="Eukaryota"/>
</dbReference>
<dbReference type="GeneTree" id="ENSGT01060000248528"/>
<dbReference type="HOGENOM" id="CLU_109117_2_3_1"/>
<dbReference type="InParanoid" id="P62804"/>
<dbReference type="OMA" id="XRISAMI"/>
<dbReference type="OrthoDB" id="10255923at2759"/>
<dbReference type="PhylomeDB" id="P62804"/>
<dbReference type="Reactome" id="R-RNO-110330">
    <property type="pathway name" value="Recognition and association of DNA glycosylase with site containing an affected purine"/>
</dbReference>
<dbReference type="Reactome" id="R-RNO-110331">
    <property type="pathway name" value="Cleavage of the damaged purine"/>
</dbReference>
<dbReference type="Reactome" id="R-RNO-212300">
    <property type="pathway name" value="PRC2 methylates histones and DNA"/>
</dbReference>
<dbReference type="Reactome" id="R-RNO-2299718">
    <property type="pathway name" value="Condensation of Prophase Chromosomes"/>
</dbReference>
<dbReference type="Reactome" id="R-RNO-2559580">
    <property type="pathway name" value="Oxidative Stress Induced Senescence"/>
</dbReference>
<dbReference type="Reactome" id="R-RNO-2559582">
    <property type="pathway name" value="Senescence-Associated Secretory Phenotype (SASP)"/>
</dbReference>
<dbReference type="Reactome" id="R-RNO-2559586">
    <property type="pathway name" value="DNA Damage/Telomere Stress Induced Senescence"/>
</dbReference>
<dbReference type="Reactome" id="R-RNO-3214841">
    <property type="pathway name" value="PKMTs methylate histone lysines"/>
</dbReference>
<dbReference type="Reactome" id="R-RNO-3214842">
    <property type="pathway name" value="HDMs demethylate histones"/>
</dbReference>
<dbReference type="Reactome" id="R-RNO-3214847">
    <property type="pathway name" value="HATs acetylate histones"/>
</dbReference>
<dbReference type="Reactome" id="R-RNO-3214858">
    <property type="pathway name" value="RMTs methylate histone arginines"/>
</dbReference>
<dbReference type="Reactome" id="R-RNO-427359">
    <property type="pathway name" value="SIRT1 negatively regulates rRNA expression"/>
</dbReference>
<dbReference type="Reactome" id="R-RNO-427413">
    <property type="pathway name" value="NoRC negatively regulates rRNA expression"/>
</dbReference>
<dbReference type="Reactome" id="R-RNO-4551638">
    <property type="pathway name" value="SUMOylation of chromatin organization proteins"/>
</dbReference>
<dbReference type="Reactome" id="R-RNO-5250924">
    <property type="pathway name" value="B-WICH complex positively regulates rRNA expression"/>
</dbReference>
<dbReference type="Reactome" id="R-RNO-5578749">
    <property type="pathway name" value="Transcriptional regulation by small RNAs"/>
</dbReference>
<dbReference type="Reactome" id="R-RNO-5625886">
    <property type="pathway name" value="Activated PKN1 stimulates transcription of AR (androgen receptor) regulated genes KLK2 and KLK3"/>
</dbReference>
<dbReference type="Reactome" id="R-RNO-5693565">
    <property type="pathway name" value="Recruitment and ATM-mediated phosphorylation of repair and signaling proteins at DNA double strand breaks"/>
</dbReference>
<dbReference type="Reactome" id="R-RNO-5693571">
    <property type="pathway name" value="Nonhomologous End-Joining (NHEJ)"/>
</dbReference>
<dbReference type="Reactome" id="R-RNO-5693607">
    <property type="pathway name" value="Processing of DNA double-strand break ends"/>
</dbReference>
<dbReference type="Reactome" id="R-RNO-606279">
    <property type="pathway name" value="Deposition of new CENPA-containing nucleosomes at the centromere"/>
</dbReference>
<dbReference type="Reactome" id="R-RNO-68616">
    <property type="pathway name" value="Assembly of the ORC complex at the origin of replication"/>
</dbReference>
<dbReference type="Reactome" id="R-RNO-69473">
    <property type="pathway name" value="G2/M DNA damage checkpoint"/>
</dbReference>
<dbReference type="Reactome" id="R-RNO-73728">
    <property type="pathway name" value="RNA Polymerase I Promoter Opening"/>
</dbReference>
<dbReference type="Reactome" id="R-RNO-73772">
    <property type="pathway name" value="RNA Polymerase I Promoter Escape"/>
</dbReference>
<dbReference type="Reactome" id="R-RNO-8936459">
    <property type="pathway name" value="RUNX1 regulates genes involved in megakaryocyte differentiation and platelet function"/>
</dbReference>
<dbReference type="Reactome" id="R-RNO-9018519">
    <property type="pathway name" value="Estrogen-dependent gene expression"/>
</dbReference>
<dbReference type="Reactome" id="R-RNO-9841922">
    <property type="pathway name" value="MLL4 and MLL3 complexes regulate expression of PPARG target genes in adipogenesis and hepatic steatosis"/>
</dbReference>
<dbReference type="Reactome" id="R-RNO-9843940">
    <property type="pathway name" value="Regulation of endogenous retroelements by KRAB-ZFP proteins"/>
</dbReference>
<dbReference type="Reactome" id="R-RNO-9843970">
    <property type="pathway name" value="Regulation of endogenous retroelements by the Human Silencing Hub (HUSH) complex"/>
</dbReference>
<dbReference type="CD-CODE" id="246D7041">
    <property type="entry name" value="Chromatoid body"/>
</dbReference>
<dbReference type="PRO" id="PR:P62804"/>
<dbReference type="Proteomes" id="UP000002494">
    <property type="component" value="Chromosome 17"/>
</dbReference>
<dbReference type="Proteomes" id="UP000002494">
    <property type="component" value="Chromosome 2"/>
</dbReference>
<dbReference type="Proteomes" id="UP000002494">
    <property type="component" value="Chromosome 4"/>
</dbReference>
<dbReference type="Bgee" id="ENSRNOG00000032224">
    <property type="expression patterns" value="Expressed in pancreas and 15 other cell types or tissues"/>
</dbReference>
<dbReference type="GO" id="GO:0043505">
    <property type="term" value="C:CENP-A containing nucleosome"/>
    <property type="evidence" value="ECO:0000266"/>
    <property type="project" value="RGD"/>
</dbReference>
<dbReference type="GO" id="GO:0005576">
    <property type="term" value="C:extracellular region"/>
    <property type="evidence" value="ECO:0007669"/>
    <property type="project" value="UniProtKB-SubCell"/>
</dbReference>
<dbReference type="GO" id="GO:0005654">
    <property type="term" value="C:nucleoplasm"/>
    <property type="evidence" value="ECO:0000304"/>
    <property type="project" value="Reactome"/>
</dbReference>
<dbReference type="GO" id="GO:0000786">
    <property type="term" value="C:nucleosome"/>
    <property type="evidence" value="ECO:0000266"/>
    <property type="project" value="RGD"/>
</dbReference>
<dbReference type="GO" id="GO:0005634">
    <property type="term" value="C:nucleus"/>
    <property type="evidence" value="ECO:0000266"/>
    <property type="project" value="RGD"/>
</dbReference>
<dbReference type="GO" id="GO:0032991">
    <property type="term" value="C:protein-containing complex"/>
    <property type="evidence" value="ECO:0000266"/>
    <property type="project" value="RGD"/>
</dbReference>
<dbReference type="GO" id="GO:0003677">
    <property type="term" value="F:DNA binding"/>
    <property type="evidence" value="ECO:0000318"/>
    <property type="project" value="GO_Central"/>
</dbReference>
<dbReference type="GO" id="GO:0046982">
    <property type="term" value="F:protein heterodimerization activity"/>
    <property type="evidence" value="ECO:0007669"/>
    <property type="project" value="InterPro"/>
</dbReference>
<dbReference type="GO" id="GO:0030527">
    <property type="term" value="F:structural constituent of chromatin"/>
    <property type="evidence" value="ECO:0000266"/>
    <property type="project" value="RGD"/>
</dbReference>
<dbReference type="GO" id="GO:0030154">
    <property type="term" value="P:cell differentiation"/>
    <property type="evidence" value="ECO:0007669"/>
    <property type="project" value="UniProtKB-KW"/>
</dbReference>
<dbReference type="GO" id="GO:0045653">
    <property type="term" value="P:negative regulation of megakaryocyte differentiation"/>
    <property type="evidence" value="ECO:0000266"/>
    <property type="project" value="RGD"/>
</dbReference>
<dbReference type="GO" id="GO:0006334">
    <property type="term" value="P:nucleosome assembly"/>
    <property type="evidence" value="ECO:0000266"/>
    <property type="project" value="RGD"/>
</dbReference>
<dbReference type="GO" id="GO:0001503">
    <property type="term" value="P:ossification"/>
    <property type="evidence" value="ECO:0007669"/>
    <property type="project" value="UniProtKB-KW"/>
</dbReference>
<dbReference type="CDD" id="cd22912">
    <property type="entry name" value="HFD_H4"/>
    <property type="match status" value="1"/>
</dbReference>
<dbReference type="FunFam" id="1.10.20.10:FF:000002">
    <property type="entry name" value="Histone H4"/>
    <property type="match status" value="1"/>
</dbReference>
<dbReference type="Gene3D" id="1.10.20.10">
    <property type="entry name" value="Histone, subunit A"/>
    <property type="match status" value="1"/>
</dbReference>
<dbReference type="InterPro" id="IPR035425">
    <property type="entry name" value="CENP-T/H4_C"/>
</dbReference>
<dbReference type="InterPro" id="IPR009072">
    <property type="entry name" value="Histone-fold"/>
</dbReference>
<dbReference type="InterPro" id="IPR001951">
    <property type="entry name" value="Histone_H4"/>
</dbReference>
<dbReference type="InterPro" id="IPR019809">
    <property type="entry name" value="Histone_H4_CS"/>
</dbReference>
<dbReference type="InterPro" id="IPR004823">
    <property type="entry name" value="TAF_TATA-bd_Histone-like_dom"/>
</dbReference>
<dbReference type="PANTHER" id="PTHR10484">
    <property type="entry name" value="HISTONE H4"/>
    <property type="match status" value="1"/>
</dbReference>
<dbReference type="Pfam" id="PF15511">
    <property type="entry name" value="CENP-T_C"/>
    <property type="match status" value="1"/>
</dbReference>
<dbReference type="PRINTS" id="PR00623">
    <property type="entry name" value="HISTONEH4"/>
</dbReference>
<dbReference type="SMART" id="SM00417">
    <property type="entry name" value="H4"/>
    <property type="match status" value="1"/>
</dbReference>
<dbReference type="SMART" id="SM00803">
    <property type="entry name" value="TAF"/>
    <property type="match status" value="1"/>
</dbReference>
<dbReference type="SUPFAM" id="SSF47113">
    <property type="entry name" value="Histone-fold"/>
    <property type="match status" value="1"/>
</dbReference>
<dbReference type="PROSITE" id="PS00047">
    <property type="entry name" value="HISTONE_H4"/>
    <property type="match status" value="1"/>
</dbReference>